<comment type="function">
    <text evidence="1">Core subunit of the mitochondrial membrane respiratory chain NADH dehydrogenase (Complex I) that is believed to belong to the minimal assembly required for catalysis. Complex I functions in the transfer of electrons from NADH to the respiratory chain. The immediate electron acceptor for the enzyme is believed to be ubiquinone (By similarity).</text>
</comment>
<comment type="catalytic activity">
    <reaction>
        <text>a ubiquinone + NADH + 5 H(+)(in) = a ubiquinol + NAD(+) + 4 H(+)(out)</text>
        <dbReference type="Rhea" id="RHEA:29091"/>
        <dbReference type="Rhea" id="RHEA-COMP:9565"/>
        <dbReference type="Rhea" id="RHEA-COMP:9566"/>
        <dbReference type="ChEBI" id="CHEBI:15378"/>
        <dbReference type="ChEBI" id="CHEBI:16389"/>
        <dbReference type="ChEBI" id="CHEBI:17976"/>
        <dbReference type="ChEBI" id="CHEBI:57540"/>
        <dbReference type="ChEBI" id="CHEBI:57945"/>
        <dbReference type="EC" id="7.1.1.2"/>
    </reaction>
</comment>
<comment type="subcellular location">
    <subcellularLocation>
        <location evidence="1">Mitochondrion inner membrane</location>
        <topology evidence="1">Multi-pass membrane protein</topology>
    </subcellularLocation>
</comment>
<comment type="similarity">
    <text evidence="3">Belongs to the complex I subunit 1 family.</text>
</comment>
<sequence>MWVLINLLILMIMVLISVAFLTLLERKILGYIQDRKGPNKIMLFGMFQPFSDALKLLSKEWFFFNYSNLFIYSPMLMFFLSLVMWILYPWFGFMYYIEFSILFMLLVLGLSVYPVLFVGWISNCNYAILGSMRLVSTMISFEINLFFLVFSLMMMVESFSFNEFFFFQNNIKFAILLYPLYLMMFTSMLIELNRTPFDLIEGESELVSGFNIEYHSSMFVLIFLSEYMNIMFMSVILSLMFYGFKYWSIKFILIYLFHICLIIWIRGILPRIRYDKLMNMCWTEMLMLVMIYLMYLYFMKEFLCI</sequence>
<accession>P34847</accession>
<dbReference type="EC" id="7.1.1.2"/>
<dbReference type="EMBL" id="L06178">
    <property type="protein sequence ID" value="AAB96810.1"/>
    <property type="molecule type" value="Genomic_DNA"/>
</dbReference>
<dbReference type="PIR" id="S52972">
    <property type="entry name" value="S52972"/>
</dbReference>
<dbReference type="RefSeq" id="NP_008094.1">
    <property type="nucleotide sequence ID" value="NC_001566.1"/>
</dbReference>
<dbReference type="SMR" id="P34847"/>
<dbReference type="GeneID" id="807692"/>
<dbReference type="CTD" id="4535"/>
<dbReference type="GO" id="GO:0005743">
    <property type="term" value="C:mitochondrial inner membrane"/>
    <property type="evidence" value="ECO:0007669"/>
    <property type="project" value="UniProtKB-SubCell"/>
</dbReference>
<dbReference type="GO" id="GO:0008137">
    <property type="term" value="F:NADH dehydrogenase (ubiquinone) activity"/>
    <property type="evidence" value="ECO:0007669"/>
    <property type="project" value="UniProtKB-EC"/>
</dbReference>
<dbReference type="GO" id="GO:0009060">
    <property type="term" value="P:aerobic respiration"/>
    <property type="evidence" value="ECO:0007669"/>
    <property type="project" value="TreeGrafter"/>
</dbReference>
<dbReference type="InterPro" id="IPR001694">
    <property type="entry name" value="NADH_UbQ_OxRdtase_su1/FPO"/>
</dbReference>
<dbReference type="InterPro" id="IPR018086">
    <property type="entry name" value="NADH_UbQ_OxRdtase_su1_CS"/>
</dbReference>
<dbReference type="PANTHER" id="PTHR11432">
    <property type="entry name" value="NADH DEHYDROGENASE SUBUNIT 1"/>
    <property type="match status" value="1"/>
</dbReference>
<dbReference type="PANTHER" id="PTHR11432:SF3">
    <property type="entry name" value="NADH-UBIQUINONE OXIDOREDUCTASE CHAIN 1"/>
    <property type="match status" value="1"/>
</dbReference>
<dbReference type="Pfam" id="PF00146">
    <property type="entry name" value="NADHdh"/>
    <property type="match status" value="1"/>
</dbReference>
<dbReference type="PROSITE" id="PS00667">
    <property type="entry name" value="COMPLEX1_ND1_1"/>
    <property type="match status" value="1"/>
</dbReference>
<dbReference type="PROSITE" id="PS00668">
    <property type="entry name" value="COMPLEX1_ND1_2"/>
    <property type="match status" value="1"/>
</dbReference>
<name>NU1M_APILI</name>
<keyword id="KW-0249">Electron transport</keyword>
<keyword id="KW-0472">Membrane</keyword>
<keyword id="KW-0496">Mitochondrion</keyword>
<keyword id="KW-0999">Mitochondrion inner membrane</keyword>
<keyword id="KW-0520">NAD</keyword>
<keyword id="KW-0679">Respiratory chain</keyword>
<keyword id="KW-1278">Translocase</keyword>
<keyword id="KW-0812">Transmembrane</keyword>
<keyword id="KW-1133">Transmembrane helix</keyword>
<keyword id="KW-0813">Transport</keyword>
<keyword id="KW-0830">Ubiquinone</keyword>
<gene>
    <name type="primary">ND1</name>
</gene>
<evidence type="ECO:0000250" key="1"/>
<evidence type="ECO:0000255" key="2"/>
<evidence type="ECO:0000305" key="3"/>
<geneLocation type="mitochondrion"/>
<reference key="1">
    <citation type="journal article" date="1993" name="Genetics">
        <title>The mitochondrial genome of the honeybee Apis mellifera: complete sequence and genome organization.</title>
        <authorList>
            <person name="Crozier R.H."/>
            <person name="Crozier Y.C."/>
        </authorList>
    </citation>
    <scope>NUCLEOTIDE SEQUENCE [GENOMIC DNA]</scope>
    <source>
        <tissue>Thorax</tissue>
    </source>
</reference>
<feature type="chain" id="PRO_0000117343" description="NADH-ubiquinone oxidoreductase chain 1">
    <location>
        <begin position="1"/>
        <end position="305"/>
    </location>
</feature>
<feature type="transmembrane region" description="Helical" evidence="2">
    <location>
        <begin position="1"/>
        <end position="21"/>
    </location>
</feature>
<feature type="transmembrane region" description="Helical" evidence="2">
    <location>
        <begin position="75"/>
        <end position="95"/>
    </location>
</feature>
<feature type="transmembrane region" description="Helical" evidence="2">
    <location>
        <begin position="101"/>
        <end position="121"/>
    </location>
</feature>
<feature type="transmembrane region" description="Helical" evidence="2">
    <location>
        <begin position="134"/>
        <end position="154"/>
    </location>
</feature>
<feature type="transmembrane region" description="Helical" evidence="2">
    <location>
        <begin position="173"/>
        <end position="193"/>
    </location>
</feature>
<feature type="transmembrane region" description="Helical" evidence="2">
    <location>
        <begin position="219"/>
        <end position="239"/>
    </location>
</feature>
<feature type="transmembrane region" description="Helical" evidence="2">
    <location>
        <begin position="249"/>
        <end position="269"/>
    </location>
</feature>
<feature type="transmembrane region" description="Helical" evidence="2">
    <location>
        <begin position="285"/>
        <end position="305"/>
    </location>
</feature>
<proteinExistence type="inferred from homology"/>
<organism>
    <name type="scientific">Apis mellifera ligustica</name>
    <name type="common">Common honeybee</name>
    <name type="synonym">Italian honeybee</name>
    <dbReference type="NCBI Taxonomy" id="7469"/>
    <lineage>
        <taxon>Eukaryota</taxon>
        <taxon>Metazoa</taxon>
        <taxon>Ecdysozoa</taxon>
        <taxon>Arthropoda</taxon>
        <taxon>Hexapoda</taxon>
        <taxon>Insecta</taxon>
        <taxon>Pterygota</taxon>
        <taxon>Neoptera</taxon>
        <taxon>Endopterygota</taxon>
        <taxon>Hymenoptera</taxon>
        <taxon>Apocrita</taxon>
        <taxon>Aculeata</taxon>
        <taxon>Apoidea</taxon>
        <taxon>Anthophila</taxon>
        <taxon>Apidae</taxon>
        <taxon>Apis</taxon>
    </lineage>
</organism>
<protein>
    <recommendedName>
        <fullName>NADH-ubiquinone oxidoreductase chain 1</fullName>
        <ecNumber>7.1.1.2</ecNumber>
    </recommendedName>
    <alternativeName>
        <fullName>NADH dehydrogenase subunit 1</fullName>
    </alternativeName>
</protein>